<reference key="1">
    <citation type="journal article" date="2003" name="DNA Res.">
        <title>Complete genome structure of Gloeobacter violaceus PCC 7421, a cyanobacterium that lacks thylakoids.</title>
        <authorList>
            <person name="Nakamura Y."/>
            <person name="Kaneko T."/>
            <person name="Sato S."/>
            <person name="Mimuro M."/>
            <person name="Miyashita H."/>
            <person name="Tsuchiya T."/>
            <person name="Sasamoto S."/>
            <person name="Watanabe A."/>
            <person name="Kawashima K."/>
            <person name="Kishida Y."/>
            <person name="Kiyokawa C."/>
            <person name="Kohara M."/>
            <person name="Matsumoto M."/>
            <person name="Matsuno A."/>
            <person name="Nakazaki N."/>
            <person name="Shimpo S."/>
            <person name="Takeuchi C."/>
            <person name="Yamada M."/>
            <person name="Tabata S."/>
        </authorList>
    </citation>
    <scope>NUCLEOTIDE SEQUENCE [LARGE SCALE GENOMIC DNA]</scope>
    <source>
        <strain>ATCC 29082 / PCC 7421</strain>
    </source>
</reference>
<evidence type="ECO:0000255" key="1">
    <source>
        <dbReference type="HAMAP-Rule" id="MF_00028"/>
    </source>
</evidence>
<organism>
    <name type="scientific">Gloeobacter violaceus (strain ATCC 29082 / PCC 7421)</name>
    <dbReference type="NCBI Taxonomy" id="251221"/>
    <lineage>
        <taxon>Bacteria</taxon>
        <taxon>Bacillati</taxon>
        <taxon>Cyanobacteriota</taxon>
        <taxon>Cyanophyceae</taxon>
        <taxon>Gloeobacterales</taxon>
        <taxon>Gloeobacteraceae</taxon>
        <taxon>Gloeobacter</taxon>
    </lineage>
</organism>
<dbReference type="EMBL" id="BA000045">
    <property type="protein sequence ID" value="BAC89713.1"/>
    <property type="molecule type" value="Genomic_DNA"/>
</dbReference>
<dbReference type="RefSeq" id="NP_924718.1">
    <property type="nucleotide sequence ID" value="NC_005125.1"/>
</dbReference>
<dbReference type="RefSeq" id="WP_011141770.1">
    <property type="nucleotide sequence ID" value="NC_005125.1"/>
</dbReference>
<dbReference type="SMR" id="Q7NJR0"/>
<dbReference type="FunCoup" id="Q7NJR0">
    <property type="interactions" value="90"/>
</dbReference>
<dbReference type="STRING" id="251221.gene:10759264"/>
<dbReference type="EnsemblBacteria" id="BAC89713">
    <property type="protein sequence ID" value="BAC89713"/>
    <property type="gene ID" value="BAC89713"/>
</dbReference>
<dbReference type="KEGG" id="gvi:glr1772"/>
<dbReference type="PATRIC" id="fig|251221.4.peg.1804"/>
<dbReference type="eggNOG" id="COG1492">
    <property type="taxonomic scope" value="Bacteria"/>
</dbReference>
<dbReference type="HOGENOM" id="CLU_019250_2_2_3"/>
<dbReference type="InParanoid" id="Q7NJR0"/>
<dbReference type="OrthoDB" id="9808302at2"/>
<dbReference type="PhylomeDB" id="Q7NJR0"/>
<dbReference type="UniPathway" id="UPA00148"/>
<dbReference type="Proteomes" id="UP000000557">
    <property type="component" value="Chromosome"/>
</dbReference>
<dbReference type="GO" id="GO:0015420">
    <property type="term" value="F:ABC-type vitamin B12 transporter activity"/>
    <property type="evidence" value="ECO:0007669"/>
    <property type="project" value="UniProtKB-UniRule"/>
</dbReference>
<dbReference type="GO" id="GO:0003824">
    <property type="term" value="F:catalytic activity"/>
    <property type="evidence" value="ECO:0007669"/>
    <property type="project" value="InterPro"/>
</dbReference>
<dbReference type="GO" id="GO:0009236">
    <property type="term" value="P:cobalamin biosynthetic process"/>
    <property type="evidence" value="ECO:0007669"/>
    <property type="project" value="UniProtKB-UniRule"/>
</dbReference>
<dbReference type="CDD" id="cd05389">
    <property type="entry name" value="CobQ_N"/>
    <property type="match status" value="1"/>
</dbReference>
<dbReference type="CDD" id="cd01750">
    <property type="entry name" value="GATase1_CobQ"/>
    <property type="match status" value="1"/>
</dbReference>
<dbReference type="Gene3D" id="3.40.50.880">
    <property type="match status" value="1"/>
</dbReference>
<dbReference type="Gene3D" id="3.40.50.300">
    <property type="entry name" value="P-loop containing nucleotide triphosphate hydrolases"/>
    <property type="match status" value="1"/>
</dbReference>
<dbReference type="HAMAP" id="MF_00028">
    <property type="entry name" value="CobQ"/>
    <property type="match status" value="1"/>
</dbReference>
<dbReference type="InterPro" id="IPR029062">
    <property type="entry name" value="Class_I_gatase-like"/>
</dbReference>
<dbReference type="InterPro" id="IPR002586">
    <property type="entry name" value="CobQ/CobB/MinD/ParA_Nub-bd_dom"/>
</dbReference>
<dbReference type="InterPro" id="IPR033949">
    <property type="entry name" value="CobQ_GATase1"/>
</dbReference>
<dbReference type="InterPro" id="IPR047045">
    <property type="entry name" value="CobQ_N"/>
</dbReference>
<dbReference type="InterPro" id="IPR004459">
    <property type="entry name" value="CobQ_synth"/>
</dbReference>
<dbReference type="InterPro" id="IPR011698">
    <property type="entry name" value="GATase_3"/>
</dbReference>
<dbReference type="InterPro" id="IPR027417">
    <property type="entry name" value="P-loop_NTPase"/>
</dbReference>
<dbReference type="NCBIfam" id="TIGR00313">
    <property type="entry name" value="cobQ"/>
    <property type="match status" value="1"/>
</dbReference>
<dbReference type="NCBIfam" id="NF001989">
    <property type="entry name" value="PRK00784.1"/>
    <property type="match status" value="1"/>
</dbReference>
<dbReference type="PANTHER" id="PTHR21343:SF1">
    <property type="entry name" value="COBYRIC ACID SYNTHASE"/>
    <property type="match status" value="1"/>
</dbReference>
<dbReference type="PANTHER" id="PTHR21343">
    <property type="entry name" value="DETHIOBIOTIN SYNTHETASE"/>
    <property type="match status" value="1"/>
</dbReference>
<dbReference type="Pfam" id="PF01656">
    <property type="entry name" value="CbiA"/>
    <property type="match status" value="1"/>
</dbReference>
<dbReference type="Pfam" id="PF07685">
    <property type="entry name" value="GATase_3"/>
    <property type="match status" value="1"/>
</dbReference>
<dbReference type="SUPFAM" id="SSF52317">
    <property type="entry name" value="Class I glutamine amidotransferase-like"/>
    <property type="match status" value="1"/>
</dbReference>
<dbReference type="SUPFAM" id="SSF52540">
    <property type="entry name" value="P-loop containing nucleoside triphosphate hydrolases"/>
    <property type="match status" value="1"/>
</dbReference>
<dbReference type="PROSITE" id="PS51274">
    <property type="entry name" value="GATASE_COBBQ"/>
    <property type="match status" value="1"/>
</dbReference>
<sequence length="490" mass="53242">MAALMVVGTSSHAGKSLLVTALGRLFHRRGVKVAPFKGQNMALNAYVTAEGHEIGHAQAVQAWACGLEPSVAMNPILLKPQGNMTSQVILKGKPAGVCGAVDYYRDYFEPGWQAVVEALAELQSQYELVICEGAGSPAEVNLRHRDLTNMRVALHLGAPTLLVTDIDRGGALAHVVGTLQVLPPEERALIKGIVINKFRGSLALLQPGLDWLAQYTGVPVVGVLPWLEMALPEEDSMGLFDRRGARKQAQLEIVVIRLPRIANFTDFDALEAEPSVRVRYVSPDGYLGHPDAIILPGSKATIPDLLALEASGMAAQIRAYGGVILGICGGLQILGSTIDDPEGFEGHPGRHPGLGLIEATTVFEPLKITRQVQVESRLPAGEPVVGYEIHQGQTTFAPTLEALFAEPHLGVVSSNRRVWGTYLHGLLDNHAWRRHWLNALRERRGLPQLPVQSGHYREQREEMFERLADAWEPHLPIDGFAQLAGFASQV</sequence>
<accession>Q7NJR0</accession>
<keyword id="KW-0169">Cobalamin biosynthesis</keyword>
<keyword id="KW-0315">Glutamine amidotransferase</keyword>
<keyword id="KW-1185">Reference proteome</keyword>
<gene>
    <name evidence="1" type="primary">cobQ</name>
    <name type="ordered locus">glr1772</name>
</gene>
<feature type="chain" id="PRO_0000141304" description="Cobyric acid synthase">
    <location>
        <begin position="1"/>
        <end position="490"/>
    </location>
</feature>
<feature type="domain" description="GATase cobBQ-type" evidence="1">
    <location>
        <begin position="250"/>
        <end position="432"/>
    </location>
</feature>
<feature type="active site" description="Nucleophile" evidence="1">
    <location>
        <position position="328"/>
    </location>
</feature>
<feature type="active site" evidence="1">
    <location>
        <position position="424"/>
    </location>
</feature>
<comment type="function">
    <text evidence="1">Catalyzes amidations at positions B, D, E, and G on adenosylcobyrinic A,C-diamide. NH(2) groups are provided by glutamine, and one molecule of ATP is hydrogenolyzed for each amidation.</text>
</comment>
<comment type="pathway">
    <text evidence="1">Cofactor biosynthesis; adenosylcobalamin biosynthesis.</text>
</comment>
<comment type="similarity">
    <text evidence="1">Belongs to the CobB/CobQ family. CobQ subfamily.</text>
</comment>
<protein>
    <recommendedName>
        <fullName evidence="1">Cobyric acid synthase</fullName>
    </recommendedName>
</protein>
<name>COBQ_GLOVI</name>
<proteinExistence type="inferred from homology"/>